<feature type="chain" id="PRO_0000298670" description="Threonylcarbamoyladenosine tRNA methylthiotransferase">
    <location>
        <begin position="1"/>
        <end position="579"/>
    </location>
</feature>
<feature type="transmembrane region" description="Helical" evidence="2">
    <location>
        <begin position="556"/>
        <end position="578"/>
    </location>
</feature>
<feature type="domain" description="MTTase N-terminal" evidence="4">
    <location>
        <begin position="64"/>
        <end position="172"/>
    </location>
</feature>
<feature type="domain" description="Radical SAM core" evidence="5">
    <location>
        <begin position="200"/>
        <end position="431"/>
    </location>
</feature>
<feature type="domain" description="TRAM" evidence="3">
    <location>
        <begin position="431"/>
        <end position="493"/>
    </location>
</feature>
<feature type="binding site" evidence="4">
    <location>
        <position position="73"/>
    </location>
    <ligand>
        <name>[4Fe-4S] cluster</name>
        <dbReference type="ChEBI" id="CHEBI:49883"/>
        <label>1</label>
    </ligand>
</feature>
<feature type="binding site" evidence="4">
    <location>
        <position position="109"/>
    </location>
    <ligand>
        <name>[4Fe-4S] cluster</name>
        <dbReference type="ChEBI" id="CHEBI:49883"/>
        <label>1</label>
    </ligand>
</feature>
<feature type="binding site" evidence="4">
    <location>
        <position position="138"/>
    </location>
    <ligand>
        <name>[4Fe-4S] cluster</name>
        <dbReference type="ChEBI" id="CHEBI:49883"/>
        <label>1</label>
    </ligand>
</feature>
<feature type="binding site" evidence="4">
    <location>
        <position position="214"/>
    </location>
    <ligand>
        <name>[4Fe-4S] cluster</name>
        <dbReference type="ChEBI" id="CHEBI:49883"/>
        <label>2</label>
        <note>4Fe-4S-S-AdoMet</note>
    </ligand>
</feature>
<feature type="binding site" evidence="4">
    <location>
        <position position="218"/>
    </location>
    <ligand>
        <name>[4Fe-4S] cluster</name>
        <dbReference type="ChEBI" id="CHEBI:49883"/>
        <label>2</label>
        <note>4Fe-4S-S-AdoMet</note>
    </ligand>
</feature>
<feature type="binding site" evidence="4">
    <location>
        <position position="221"/>
    </location>
    <ligand>
        <name>[4Fe-4S] cluster</name>
        <dbReference type="ChEBI" id="CHEBI:49883"/>
        <label>2</label>
        <note>4Fe-4S-S-AdoMet</note>
    </ligand>
</feature>
<feature type="modified residue" description="Phosphoserine" evidence="13">
    <location>
        <position position="53"/>
    </location>
</feature>
<feature type="modified residue" description="Phosphoserine" evidence="13">
    <location>
        <position position="122"/>
    </location>
</feature>
<feature type="modified residue" description="Phosphothreonine" evidence="12 13">
    <location>
        <position position="499"/>
    </location>
</feature>
<feature type="splice variant" id="VSP_027450" description="In isoform 2." evidence="9">
    <original>MPSASCDTLLDDIEDIVSQEDSKPQDRHFVRKDVVPKVRRRNTQKYLQEEENSPPSDSTIPGIQKIWIRTWGCSHNNSDGEYMAGQLAAYGYKI</original>
    <variation>MLSRRYEGEIPKNICKRKKTVHQV</variation>
    <location>
        <begin position="1"/>
        <end position="94"/>
    </location>
</feature>
<feature type="splice variant" id="VSP_027451" description="In isoform 3." evidence="10">
    <original>EN</original>
    <variation>GE</variation>
    <location>
        <begin position="96"/>
        <end position="97"/>
    </location>
</feature>
<feature type="splice variant" id="VSP_027452" description="In isoform 3." evidence="10">
    <location>
        <begin position="98"/>
        <end position="579"/>
    </location>
</feature>
<feature type="splice variant" id="VSP_027453" description="In isoform 2." evidence="9">
    <location>
        <begin position="413"/>
        <end position="433"/>
    </location>
</feature>
<feature type="sequence variant" id="VAR_052705" description="In dbSNP:rs9460608.">
    <original>K</original>
    <variation>R</variation>
    <location>
        <position position="484"/>
    </location>
</feature>
<feature type="sequence conflict" description="In Ref. 1; BAA91102." evidence="11" ref="1">
    <original>N</original>
    <variation>S</variation>
    <location>
        <position position="211"/>
    </location>
</feature>
<organism>
    <name type="scientific">Homo sapiens</name>
    <name type="common">Human</name>
    <dbReference type="NCBI Taxonomy" id="9606"/>
    <lineage>
        <taxon>Eukaryota</taxon>
        <taxon>Metazoa</taxon>
        <taxon>Chordata</taxon>
        <taxon>Craniata</taxon>
        <taxon>Vertebrata</taxon>
        <taxon>Euteleostomi</taxon>
        <taxon>Mammalia</taxon>
        <taxon>Eutheria</taxon>
        <taxon>Euarchontoglires</taxon>
        <taxon>Primates</taxon>
        <taxon>Haplorrhini</taxon>
        <taxon>Catarrhini</taxon>
        <taxon>Hominidae</taxon>
        <taxon>Homo</taxon>
    </lineage>
</organism>
<protein>
    <recommendedName>
        <fullName>Threonylcarbamoyladenosine tRNA methylthiotransferase</fullName>
        <ecNumber evidence="1">2.8.4.5</ecNumber>
    </recommendedName>
    <alternativeName>
        <fullName>CDK5 regulatory subunit-associated protein 1-like 1</fullName>
    </alternativeName>
    <alternativeName>
        <fullName>tRNA-t(6)A37 methylthiotransferase</fullName>
    </alternativeName>
</protein>
<gene>
    <name type="primary">CDKAL1</name>
</gene>
<accession>Q5VV42</accession>
<accession>A8K6S0</accession>
<accession>Q6P385</accession>
<accession>Q6ZR27</accession>
<accession>Q9NXB3</accession>
<evidence type="ECO:0000250" key="1">
    <source>
        <dbReference type="UniProtKB" id="Q91WE6"/>
    </source>
</evidence>
<evidence type="ECO:0000255" key="2"/>
<evidence type="ECO:0000255" key="3">
    <source>
        <dbReference type="PROSITE-ProRule" id="PRU00208"/>
    </source>
</evidence>
<evidence type="ECO:0000255" key="4">
    <source>
        <dbReference type="PROSITE-ProRule" id="PRU00780"/>
    </source>
</evidence>
<evidence type="ECO:0000255" key="5">
    <source>
        <dbReference type="PROSITE-ProRule" id="PRU01266"/>
    </source>
</evidence>
<evidence type="ECO:0000269" key="6">
    <source>
    </source>
</evidence>
<evidence type="ECO:0000269" key="7">
    <source>
    </source>
</evidence>
<evidence type="ECO:0000269" key="8">
    <source>
    </source>
</evidence>
<evidence type="ECO:0000303" key="9">
    <source>
    </source>
</evidence>
<evidence type="ECO:0000303" key="10">
    <source>
    </source>
</evidence>
<evidence type="ECO:0000305" key="11"/>
<evidence type="ECO:0007744" key="12">
    <source>
    </source>
</evidence>
<evidence type="ECO:0007744" key="13">
    <source>
    </source>
</evidence>
<keyword id="KW-0004">4Fe-4S</keyword>
<keyword id="KW-0025">Alternative splicing</keyword>
<keyword id="KW-0219">Diabetes mellitus</keyword>
<keyword id="KW-0256">Endoplasmic reticulum</keyword>
<keyword id="KW-0408">Iron</keyword>
<keyword id="KW-0411">Iron-sulfur</keyword>
<keyword id="KW-0472">Membrane</keyword>
<keyword id="KW-0479">Metal-binding</keyword>
<keyword id="KW-0597">Phosphoprotein</keyword>
<keyword id="KW-1267">Proteomics identification</keyword>
<keyword id="KW-1185">Reference proteome</keyword>
<keyword id="KW-0949">S-adenosyl-L-methionine</keyword>
<keyword id="KW-0808">Transferase</keyword>
<keyword id="KW-0812">Transmembrane</keyword>
<keyword id="KW-1133">Transmembrane helix</keyword>
<keyword id="KW-0819">tRNA processing</keyword>
<name>CDKAL_HUMAN</name>
<proteinExistence type="evidence at protein level"/>
<reference key="1">
    <citation type="journal article" date="2004" name="Nat. Genet.">
        <title>Complete sequencing and characterization of 21,243 full-length human cDNAs.</title>
        <authorList>
            <person name="Ota T."/>
            <person name="Suzuki Y."/>
            <person name="Nishikawa T."/>
            <person name="Otsuki T."/>
            <person name="Sugiyama T."/>
            <person name="Irie R."/>
            <person name="Wakamatsu A."/>
            <person name="Hayashi K."/>
            <person name="Sato H."/>
            <person name="Nagai K."/>
            <person name="Kimura K."/>
            <person name="Makita H."/>
            <person name="Sekine M."/>
            <person name="Obayashi M."/>
            <person name="Nishi T."/>
            <person name="Shibahara T."/>
            <person name="Tanaka T."/>
            <person name="Ishii S."/>
            <person name="Yamamoto J."/>
            <person name="Saito K."/>
            <person name="Kawai Y."/>
            <person name="Isono Y."/>
            <person name="Nakamura Y."/>
            <person name="Nagahari K."/>
            <person name="Murakami K."/>
            <person name="Yasuda T."/>
            <person name="Iwayanagi T."/>
            <person name="Wagatsuma M."/>
            <person name="Shiratori A."/>
            <person name="Sudo H."/>
            <person name="Hosoiri T."/>
            <person name="Kaku Y."/>
            <person name="Kodaira H."/>
            <person name="Kondo H."/>
            <person name="Sugawara M."/>
            <person name="Takahashi M."/>
            <person name="Kanda K."/>
            <person name="Yokoi T."/>
            <person name="Furuya T."/>
            <person name="Kikkawa E."/>
            <person name="Omura Y."/>
            <person name="Abe K."/>
            <person name="Kamihara K."/>
            <person name="Katsuta N."/>
            <person name="Sato K."/>
            <person name="Tanikawa M."/>
            <person name="Yamazaki M."/>
            <person name="Ninomiya K."/>
            <person name="Ishibashi T."/>
            <person name="Yamashita H."/>
            <person name="Murakawa K."/>
            <person name="Fujimori K."/>
            <person name="Tanai H."/>
            <person name="Kimata M."/>
            <person name="Watanabe M."/>
            <person name="Hiraoka S."/>
            <person name="Chiba Y."/>
            <person name="Ishida S."/>
            <person name="Ono Y."/>
            <person name="Takiguchi S."/>
            <person name="Watanabe S."/>
            <person name="Yosida M."/>
            <person name="Hotuta T."/>
            <person name="Kusano J."/>
            <person name="Kanehori K."/>
            <person name="Takahashi-Fujii A."/>
            <person name="Hara H."/>
            <person name="Tanase T.-O."/>
            <person name="Nomura Y."/>
            <person name="Togiya S."/>
            <person name="Komai F."/>
            <person name="Hara R."/>
            <person name="Takeuchi K."/>
            <person name="Arita M."/>
            <person name="Imose N."/>
            <person name="Musashino K."/>
            <person name="Yuuki H."/>
            <person name="Oshima A."/>
            <person name="Sasaki N."/>
            <person name="Aotsuka S."/>
            <person name="Yoshikawa Y."/>
            <person name="Matsunawa H."/>
            <person name="Ichihara T."/>
            <person name="Shiohata N."/>
            <person name="Sano S."/>
            <person name="Moriya S."/>
            <person name="Momiyama H."/>
            <person name="Satoh N."/>
            <person name="Takami S."/>
            <person name="Terashima Y."/>
            <person name="Suzuki O."/>
            <person name="Nakagawa S."/>
            <person name="Senoh A."/>
            <person name="Mizoguchi H."/>
            <person name="Goto Y."/>
            <person name="Shimizu F."/>
            <person name="Wakebe H."/>
            <person name="Hishigaki H."/>
            <person name="Watanabe T."/>
            <person name="Sugiyama A."/>
            <person name="Takemoto M."/>
            <person name="Kawakami B."/>
            <person name="Yamazaki M."/>
            <person name="Watanabe K."/>
            <person name="Kumagai A."/>
            <person name="Itakura S."/>
            <person name="Fukuzumi Y."/>
            <person name="Fujimori Y."/>
            <person name="Komiyama M."/>
            <person name="Tashiro H."/>
            <person name="Tanigami A."/>
            <person name="Fujiwara T."/>
            <person name="Ono T."/>
            <person name="Yamada K."/>
            <person name="Fujii Y."/>
            <person name="Ozaki K."/>
            <person name="Hirao M."/>
            <person name="Ohmori Y."/>
            <person name="Kawabata A."/>
            <person name="Hikiji T."/>
            <person name="Kobatake N."/>
            <person name="Inagaki H."/>
            <person name="Ikema Y."/>
            <person name="Okamoto S."/>
            <person name="Okitani R."/>
            <person name="Kawakami T."/>
            <person name="Noguchi S."/>
            <person name="Itoh T."/>
            <person name="Shigeta K."/>
            <person name="Senba T."/>
            <person name="Matsumura K."/>
            <person name="Nakajima Y."/>
            <person name="Mizuno T."/>
            <person name="Morinaga M."/>
            <person name="Sasaki M."/>
            <person name="Togashi T."/>
            <person name="Oyama M."/>
            <person name="Hata H."/>
            <person name="Watanabe M."/>
            <person name="Komatsu T."/>
            <person name="Mizushima-Sugano J."/>
            <person name="Satoh T."/>
            <person name="Shirai Y."/>
            <person name="Takahashi Y."/>
            <person name="Nakagawa K."/>
            <person name="Okumura K."/>
            <person name="Nagase T."/>
            <person name="Nomura N."/>
            <person name="Kikuchi H."/>
            <person name="Masuho Y."/>
            <person name="Yamashita R."/>
            <person name="Nakai K."/>
            <person name="Yada T."/>
            <person name="Nakamura Y."/>
            <person name="Ohara O."/>
            <person name="Isogai T."/>
            <person name="Sugano S."/>
        </authorList>
    </citation>
    <scope>NUCLEOTIDE SEQUENCE [LARGE SCALE MRNA] (ISOFORMS 1 AND 2)</scope>
    <source>
        <tissue>Placenta</tissue>
        <tissue>Trachea</tissue>
    </source>
</reference>
<reference key="2">
    <citation type="journal article" date="2003" name="Nature">
        <title>The DNA sequence and analysis of human chromosome 6.</title>
        <authorList>
            <person name="Mungall A.J."/>
            <person name="Palmer S.A."/>
            <person name="Sims S.K."/>
            <person name="Edwards C.A."/>
            <person name="Ashurst J.L."/>
            <person name="Wilming L."/>
            <person name="Jones M.C."/>
            <person name="Horton R."/>
            <person name="Hunt S.E."/>
            <person name="Scott C.E."/>
            <person name="Gilbert J.G.R."/>
            <person name="Clamp M.E."/>
            <person name="Bethel G."/>
            <person name="Milne S."/>
            <person name="Ainscough R."/>
            <person name="Almeida J.P."/>
            <person name="Ambrose K.D."/>
            <person name="Andrews T.D."/>
            <person name="Ashwell R.I.S."/>
            <person name="Babbage A.K."/>
            <person name="Bagguley C.L."/>
            <person name="Bailey J."/>
            <person name="Banerjee R."/>
            <person name="Barker D.J."/>
            <person name="Barlow K.F."/>
            <person name="Bates K."/>
            <person name="Beare D.M."/>
            <person name="Beasley H."/>
            <person name="Beasley O."/>
            <person name="Bird C.P."/>
            <person name="Blakey S.E."/>
            <person name="Bray-Allen S."/>
            <person name="Brook J."/>
            <person name="Brown A.J."/>
            <person name="Brown J.Y."/>
            <person name="Burford D.C."/>
            <person name="Burrill W."/>
            <person name="Burton J."/>
            <person name="Carder C."/>
            <person name="Carter N.P."/>
            <person name="Chapman J.C."/>
            <person name="Clark S.Y."/>
            <person name="Clark G."/>
            <person name="Clee C.M."/>
            <person name="Clegg S."/>
            <person name="Cobley V."/>
            <person name="Collier R.E."/>
            <person name="Collins J.E."/>
            <person name="Colman L.K."/>
            <person name="Corby N.R."/>
            <person name="Coville G.J."/>
            <person name="Culley K.M."/>
            <person name="Dhami P."/>
            <person name="Davies J."/>
            <person name="Dunn M."/>
            <person name="Earthrowl M.E."/>
            <person name="Ellington A.E."/>
            <person name="Evans K.A."/>
            <person name="Faulkner L."/>
            <person name="Francis M.D."/>
            <person name="Frankish A."/>
            <person name="Frankland J."/>
            <person name="French L."/>
            <person name="Garner P."/>
            <person name="Garnett J."/>
            <person name="Ghori M.J."/>
            <person name="Gilby L.M."/>
            <person name="Gillson C.J."/>
            <person name="Glithero R.J."/>
            <person name="Grafham D.V."/>
            <person name="Grant M."/>
            <person name="Gribble S."/>
            <person name="Griffiths C."/>
            <person name="Griffiths M.N.D."/>
            <person name="Hall R."/>
            <person name="Halls K.S."/>
            <person name="Hammond S."/>
            <person name="Harley J.L."/>
            <person name="Hart E.A."/>
            <person name="Heath P.D."/>
            <person name="Heathcott R."/>
            <person name="Holmes S.J."/>
            <person name="Howden P.J."/>
            <person name="Howe K.L."/>
            <person name="Howell G.R."/>
            <person name="Huckle E."/>
            <person name="Humphray S.J."/>
            <person name="Humphries M.D."/>
            <person name="Hunt A.R."/>
            <person name="Johnson C.M."/>
            <person name="Joy A.A."/>
            <person name="Kay M."/>
            <person name="Keenan S.J."/>
            <person name="Kimberley A.M."/>
            <person name="King A."/>
            <person name="Laird G.K."/>
            <person name="Langford C."/>
            <person name="Lawlor S."/>
            <person name="Leongamornlert D.A."/>
            <person name="Leversha M."/>
            <person name="Lloyd C.R."/>
            <person name="Lloyd D.M."/>
            <person name="Loveland J.E."/>
            <person name="Lovell J."/>
            <person name="Martin S."/>
            <person name="Mashreghi-Mohammadi M."/>
            <person name="Maslen G.L."/>
            <person name="Matthews L."/>
            <person name="McCann O.T."/>
            <person name="McLaren S.J."/>
            <person name="McLay K."/>
            <person name="McMurray A."/>
            <person name="Moore M.J.F."/>
            <person name="Mullikin J.C."/>
            <person name="Niblett D."/>
            <person name="Nickerson T."/>
            <person name="Novik K.L."/>
            <person name="Oliver K."/>
            <person name="Overton-Larty E.K."/>
            <person name="Parker A."/>
            <person name="Patel R."/>
            <person name="Pearce A.V."/>
            <person name="Peck A.I."/>
            <person name="Phillimore B.J.C.T."/>
            <person name="Phillips S."/>
            <person name="Plumb R.W."/>
            <person name="Porter K.M."/>
            <person name="Ramsey Y."/>
            <person name="Ranby S.A."/>
            <person name="Rice C.M."/>
            <person name="Ross M.T."/>
            <person name="Searle S.M."/>
            <person name="Sehra H.K."/>
            <person name="Sheridan E."/>
            <person name="Skuce C.D."/>
            <person name="Smith S."/>
            <person name="Smith M."/>
            <person name="Spraggon L."/>
            <person name="Squares S.L."/>
            <person name="Steward C.A."/>
            <person name="Sycamore N."/>
            <person name="Tamlyn-Hall G."/>
            <person name="Tester J."/>
            <person name="Theaker A.J."/>
            <person name="Thomas D.W."/>
            <person name="Thorpe A."/>
            <person name="Tracey A."/>
            <person name="Tromans A."/>
            <person name="Tubby B."/>
            <person name="Wall M."/>
            <person name="Wallis J.M."/>
            <person name="West A.P."/>
            <person name="White S.S."/>
            <person name="Whitehead S.L."/>
            <person name="Whittaker H."/>
            <person name="Wild A."/>
            <person name="Willey D.J."/>
            <person name="Wilmer T.E."/>
            <person name="Wood J.M."/>
            <person name="Wray P.W."/>
            <person name="Wyatt J.C."/>
            <person name="Young L."/>
            <person name="Younger R.M."/>
            <person name="Bentley D.R."/>
            <person name="Coulson A."/>
            <person name="Durbin R.M."/>
            <person name="Hubbard T."/>
            <person name="Sulston J.E."/>
            <person name="Dunham I."/>
            <person name="Rogers J."/>
            <person name="Beck S."/>
        </authorList>
    </citation>
    <scope>NUCLEOTIDE SEQUENCE [LARGE SCALE GENOMIC DNA]</scope>
</reference>
<reference key="3">
    <citation type="submission" date="2005-07" db="EMBL/GenBank/DDBJ databases">
        <authorList>
            <person name="Mural R.J."/>
            <person name="Istrail S."/>
            <person name="Sutton G.G."/>
            <person name="Florea L."/>
            <person name="Halpern A.L."/>
            <person name="Mobarry C.M."/>
            <person name="Lippert R."/>
            <person name="Walenz B."/>
            <person name="Shatkay H."/>
            <person name="Dew I."/>
            <person name="Miller J.R."/>
            <person name="Flanigan M.J."/>
            <person name="Edwards N.J."/>
            <person name="Bolanos R."/>
            <person name="Fasulo D."/>
            <person name="Halldorsson B.V."/>
            <person name="Hannenhalli S."/>
            <person name="Turner R."/>
            <person name="Yooseph S."/>
            <person name="Lu F."/>
            <person name="Nusskern D.R."/>
            <person name="Shue B.C."/>
            <person name="Zheng X.H."/>
            <person name="Zhong F."/>
            <person name="Delcher A.L."/>
            <person name="Huson D.H."/>
            <person name="Kravitz S.A."/>
            <person name="Mouchard L."/>
            <person name="Reinert K."/>
            <person name="Remington K.A."/>
            <person name="Clark A.G."/>
            <person name="Waterman M.S."/>
            <person name="Eichler E.E."/>
            <person name="Adams M.D."/>
            <person name="Hunkapiller M.W."/>
            <person name="Myers E.W."/>
            <person name="Venter J.C."/>
        </authorList>
    </citation>
    <scope>NUCLEOTIDE SEQUENCE [LARGE SCALE GENOMIC DNA]</scope>
</reference>
<reference key="4">
    <citation type="journal article" date="2004" name="Genome Res.">
        <title>The status, quality, and expansion of the NIH full-length cDNA project: the Mammalian Gene Collection (MGC).</title>
        <authorList>
            <consortium name="The MGC Project Team"/>
        </authorList>
    </citation>
    <scope>NUCLEOTIDE SEQUENCE [LARGE SCALE MRNA] (ISOFORMS 1 AND 3)</scope>
    <source>
        <tissue>Testis</tissue>
    </source>
</reference>
<reference key="5">
    <citation type="journal article" date="2007" name="Nat. Genet.">
        <title>A variant in CDKAL1 influences insulin response and risk of type 2 diabetes.</title>
        <authorList>
            <person name="Steinthorsdottir V."/>
            <person name="Thorleifsson G."/>
            <person name="Reynisdottir I."/>
            <person name="Benediktsson R."/>
            <person name="Jonsdottir T."/>
            <person name="Walters G.B."/>
            <person name="Styrkarsdottir U."/>
            <person name="Gretarsdottir S."/>
            <person name="Emilsson V."/>
            <person name="Ghosh S."/>
            <person name="Baker A."/>
            <person name="Snorradottir S."/>
            <person name="Bjarnason H."/>
            <person name="Ng M.C."/>
            <person name="Hansen T."/>
            <person name="Bagger Y."/>
            <person name="Wilensky R.L."/>
            <person name="Reilly M.P."/>
            <person name="Adeyemo A."/>
            <person name="Chen Y."/>
            <person name="Zhou J."/>
            <person name="Gudnason V."/>
            <person name="Chen G."/>
            <person name="Huang H."/>
            <person name="Lashley K."/>
            <person name="Doumatey A."/>
            <person name="So W.Y."/>
            <person name="Ma R.C."/>
            <person name="Andersen G."/>
            <person name="Borch-Johnsen K."/>
            <person name="Jorgensen T."/>
            <person name="van Vliet-Ostaptchouk J.V."/>
            <person name="Hofker M.H."/>
            <person name="Wijmenga C."/>
            <person name="Christiansen C."/>
            <person name="Rader D.J."/>
            <person name="Rotimi C."/>
            <person name="Gurney M."/>
            <person name="Chan J.C."/>
            <person name="Pedersen O."/>
            <person name="Sigurdsson G."/>
            <person name="Gulcher J.R."/>
            <person name="Thorsteinsdottir U."/>
            <person name="Kong A."/>
            <person name="Stefansson K."/>
        </authorList>
    </citation>
    <scope>INVOLVEMENT IN SUSCEPTIBILITY TO T2D</scope>
</reference>
<reference key="6">
    <citation type="journal article" date="2007" name="Science">
        <title>Genome-wide association analysis identifies loci for type 2 diabetes and triglyceride levels.</title>
        <authorList>
            <person name="Saxena R."/>
            <person name="Voight B.F."/>
            <person name="Lyssenko V."/>
            <person name="Burtt N.P."/>
            <person name="de Bakker P.I."/>
            <person name="Chen H."/>
            <person name="Roix J.J."/>
            <person name="Kathiresan S."/>
            <person name="Hirschhorn J.N."/>
            <person name="Daly M.J."/>
            <person name="Hughes T.E."/>
            <person name="Groop L."/>
            <person name="Altshuler D."/>
            <person name="Almgren P."/>
            <person name="Florez J.C."/>
            <person name="Meyer J."/>
            <person name="Ardlie K."/>
            <person name="Bengtsson Bostrom K."/>
            <person name="Isomaa B."/>
            <person name="Lettre G."/>
            <person name="Lindblad U."/>
            <person name="Lyon H.N."/>
            <person name="Melander O."/>
            <person name="Newton-Cheh C."/>
            <person name="Nilsson P."/>
            <person name="Orho-Melander M."/>
            <person name="Rastam L."/>
            <person name="Speliotes E.K."/>
            <person name="Taskinen M.R."/>
            <person name="Tuomi T."/>
            <person name="Guiducci C."/>
            <person name="Berglund A."/>
            <person name="Carlson J."/>
            <person name="Gianniny L."/>
            <person name="Hackett R."/>
            <person name="Hall L."/>
            <person name="Holmkvist J."/>
            <person name="Laurila E."/>
            <person name="Sjogren M."/>
            <person name="Sterner M."/>
            <person name="Surti A."/>
            <person name="Svensson M."/>
            <person name="Svensson M."/>
            <person name="Tewhey R."/>
            <person name="Blumenstiel B."/>
            <person name="Parkin M."/>
            <person name="Defelice M."/>
            <person name="Barry R."/>
            <person name="Brodeur W."/>
            <person name="Camarata J."/>
            <person name="Chia N."/>
            <person name="Fava M."/>
            <person name="Gibbons J."/>
            <person name="Handsaker B."/>
            <person name="Healy C."/>
            <person name="Nguyen K."/>
            <person name="Gates C."/>
            <person name="Sougnez C."/>
            <person name="Gage D."/>
            <person name="Nizzari M."/>
            <person name="Gabriel S.B."/>
            <person name="Chirn G.W."/>
            <person name="Ma Q."/>
            <person name="Parikh H."/>
            <person name="Richardson D."/>
            <person name="Ricke D."/>
            <person name="Purcell S."/>
        </authorList>
    </citation>
    <scope>INVOLVEMENT IN SUSCEPTIBILITY TO T2D</scope>
</reference>
<reference key="7">
    <citation type="journal article" date="2008" name="Proc. Natl. Acad. Sci. U.S.A.">
        <title>A quantitative atlas of mitotic phosphorylation.</title>
        <authorList>
            <person name="Dephoure N."/>
            <person name="Zhou C."/>
            <person name="Villen J."/>
            <person name="Beausoleil S.A."/>
            <person name="Bakalarski C.E."/>
            <person name="Elledge S.J."/>
            <person name="Gygi S.P."/>
        </authorList>
    </citation>
    <scope>PHOSPHORYLATION [LARGE SCALE ANALYSIS] AT THR-499</scope>
    <scope>IDENTIFICATION BY MASS SPECTROMETRY [LARGE SCALE ANALYSIS]</scope>
    <source>
        <tissue>Cervix carcinoma</tissue>
    </source>
</reference>
<reference key="8">
    <citation type="journal article" date="2011" name="BMC Syst. Biol.">
        <title>Initial characterization of the human central proteome.</title>
        <authorList>
            <person name="Burkard T.R."/>
            <person name="Planyavsky M."/>
            <person name="Kaupe I."/>
            <person name="Breitwieser F.P."/>
            <person name="Buerckstuemmer T."/>
            <person name="Bennett K.L."/>
            <person name="Superti-Furga G."/>
            <person name="Colinge J."/>
        </authorList>
    </citation>
    <scope>IDENTIFICATION BY MASS SPECTROMETRY [LARGE SCALE ANALYSIS]</scope>
</reference>
<reference key="9">
    <citation type="journal article" date="2012" name="J. Biol. Chem.">
        <title>CDK5 regulatory subunit associated protein 1-like 1 (CDKAL1) is a tail-anchored protein in the endoplasmic reticulum (ER) of insulinoma cells.</title>
        <authorList>
            <person name="Brambillasca S."/>
            <person name="Altkrueger A."/>
            <person name="Colombo S."/>
            <person name="Friedrich A."/>
            <person name="Eickelmann P."/>
            <person name="Mark M."/>
            <person name="Borgese N."/>
            <person name="Solimena M."/>
        </authorList>
    </citation>
    <scope>TISSUE SPECIFICITY</scope>
    <scope>SUBCELLULAR LOCATION</scope>
</reference>
<reference key="10">
    <citation type="journal article" date="2013" name="J. Proteome Res.">
        <title>Toward a comprehensive characterization of a human cancer cell phosphoproteome.</title>
        <authorList>
            <person name="Zhou H."/>
            <person name="Di Palma S."/>
            <person name="Preisinger C."/>
            <person name="Peng M."/>
            <person name="Polat A.N."/>
            <person name="Heck A.J."/>
            <person name="Mohammed S."/>
        </authorList>
    </citation>
    <scope>PHOSPHORYLATION [LARGE SCALE ANALYSIS] AT SER-53; SER-122 AND THR-499</scope>
    <scope>IDENTIFICATION BY MASS SPECTROMETRY [LARGE SCALE ANALYSIS]</scope>
    <source>
        <tissue>Cervix carcinoma</tissue>
        <tissue>Erythroleukemia</tissue>
    </source>
</reference>
<dbReference type="EC" id="2.8.4.5" evidence="1"/>
<dbReference type="EMBL" id="AK000349">
    <property type="protein sequence ID" value="BAA91102.1"/>
    <property type="molecule type" value="mRNA"/>
</dbReference>
<dbReference type="EMBL" id="AK128546">
    <property type="protein sequence ID" value="BAC87494.1"/>
    <property type="status" value="ALT_FRAME"/>
    <property type="molecule type" value="mRNA"/>
</dbReference>
<dbReference type="EMBL" id="AK291735">
    <property type="protein sequence ID" value="BAF84424.1"/>
    <property type="molecule type" value="mRNA"/>
</dbReference>
<dbReference type="EMBL" id="AL022717">
    <property type="status" value="NOT_ANNOTATED_CDS"/>
    <property type="molecule type" value="Genomic_DNA"/>
</dbReference>
<dbReference type="EMBL" id="AL033521">
    <property type="status" value="NOT_ANNOTATED_CDS"/>
    <property type="molecule type" value="Genomic_DNA"/>
</dbReference>
<dbReference type="EMBL" id="AL035090">
    <property type="status" value="NOT_ANNOTATED_CDS"/>
    <property type="molecule type" value="Genomic_DNA"/>
</dbReference>
<dbReference type="EMBL" id="AL451080">
    <property type="status" value="NOT_ANNOTATED_CDS"/>
    <property type="molecule type" value="Genomic_DNA"/>
</dbReference>
<dbReference type="EMBL" id="AL512405">
    <property type="status" value="NOT_ANNOTATED_CDS"/>
    <property type="molecule type" value="Genomic_DNA"/>
</dbReference>
<dbReference type="EMBL" id="AL513015">
    <property type="status" value="NOT_ANNOTATED_CDS"/>
    <property type="molecule type" value="Genomic_DNA"/>
</dbReference>
<dbReference type="EMBL" id="AL513188">
    <property type="status" value="NOT_ANNOTATED_CDS"/>
    <property type="molecule type" value="Genomic_DNA"/>
</dbReference>
<dbReference type="EMBL" id="AL513549">
    <property type="status" value="NOT_ANNOTATED_CDS"/>
    <property type="molecule type" value="Genomic_DNA"/>
</dbReference>
<dbReference type="EMBL" id="CH471087">
    <property type="protein sequence ID" value="EAW55426.1"/>
    <property type="molecule type" value="Genomic_DNA"/>
</dbReference>
<dbReference type="EMBL" id="BC064145">
    <property type="protein sequence ID" value="AAH64145.1"/>
    <property type="molecule type" value="mRNA"/>
</dbReference>
<dbReference type="EMBL" id="BC121020">
    <property type="protein sequence ID" value="AAI21021.1"/>
    <property type="molecule type" value="mRNA"/>
</dbReference>
<dbReference type="EMBL" id="BC121021">
    <property type="protein sequence ID" value="AAI21022.1"/>
    <property type="molecule type" value="mRNA"/>
</dbReference>
<dbReference type="CCDS" id="CCDS4546.1">
    <molecule id="Q5VV42-1"/>
</dbReference>
<dbReference type="RefSeq" id="NP_060244.2">
    <molecule id="Q5VV42-1"/>
    <property type="nucleotide sequence ID" value="NM_017774.3"/>
</dbReference>
<dbReference type="RefSeq" id="XP_047274905.1">
    <molecule id="Q5VV42-1"/>
    <property type="nucleotide sequence ID" value="XM_047418949.1"/>
</dbReference>
<dbReference type="RefSeq" id="XP_054211725.1">
    <molecule id="Q5VV42-1"/>
    <property type="nucleotide sequence ID" value="XM_054355750.1"/>
</dbReference>
<dbReference type="SMR" id="Q5VV42"/>
<dbReference type="BioGRID" id="120247">
    <property type="interactions" value="290"/>
</dbReference>
<dbReference type="FunCoup" id="Q5VV42">
    <property type="interactions" value="2460"/>
</dbReference>
<dbReference type="IntAct" id="Q5VV42">
    <property type="interactions" value="103"/>
</dbReference>
<dbReference type="MINT" id="Q5VV42"/>
<dbReference type="STRING" id="9606.ENSP00000274695"/>
<dbReference type="GlyGen" id="Q5VV42">
    <property type="glycosylation" value="2 sites, 1 O-linked glycan (1 site)"/>
</dbReference>
<dbReference type="iPTMnet" id="Q5VV42"/>
<dbReference type="MetOSite" id="Q5VV42"/>
<dbReference type="PhosphoSitePlus" id="Q5VV42"/>
<dbReference type="SwissPalm" id="Q5VV42"/>
<dbReference type="BioMuta" id="CDKAL1"/>
<dbReference type="DMDM" id="74747199"/>
<dbReference type="jPOST" id="Q5VV42"/>
<dbReference type="MassIVE" id="Q5VV42"/>
<dbReference type="PaxDb" id="9606-ENSP00000274695"/>
<dbReference type="PeptideAtlas" id="Q5VV42"/>
<dbReference type="ProteomicsDB" id="65438">
    <molecule id="Q5VV42-1"/>
</dbReference>
<dbReference type="ProteomicsDB" id="65439">
    <molecule id="Q5VV42-2"/>
</dbReference>
<dbReference type="ProteomicsDB" id="65440">
    <molecule id="Q5VV42-3"/>
</dbReference>
<dbReference type="Pumba" id="Q5VV42"/>
<dbReference type="Antibodypedia" id="2738">
    <property type="antibodies" value="244 antibodies from 32 providers"/>
</dbReference>
<dbReference type="DNASU" id="54901"/>
<dbReference type="Ensembl" id="ENST00000274695.8">
    <molecule id="Q5VV42-1"/>
    <property type="protein sequence ID" value="ENSP00000274695.4"/>
    <property type="gene ID" value="ENSG00000145996.11"/>
</dbReference>
<dbReference type="Ensembl" id="ENST00000378610.1">
    <molecule id="Q5VV42-1"/>
    <property type="protein sequence ID" value="ENSP00000367873.1"/>
    <property type="gene ID" value="ENSG00000145996.11"/>
</dbReference>
<dbReference type="Ensembl" id="ENST00000613575.4">
    <molecule id="Q5VV42-3"/>
    <property type="protein sequence ID" value="ENSP00000481755.1"/>
    <property type="gene ID" value="ENSG00000145996.11"/>
</dbReference>
<dbReference type="GeneID" id="54901"/>
<dbReference type="KEGG" id="hsa:54901"/>
<dbReference type="MANE-Select" id="ENST00000274695.8">
    <property type="protein sequence ID" value="ENSP00000274695.4"/>
    <property type="RefSeq nucleotide sequence ID" value="NM_017774.3"/>
    <property type="RefSeq protein sequence ID" value="NP_060244.2"/>
</dbReference>
<dbReference type="UCSC" id="uc003ndb.2">
    <molecule id="Q5VV42-1"/>
    <property type="organism name" value="human"/>
</dbReference>
<dbReference type="AGR" id="HGNC:21050"/>
<dbReference type="CTD" id="54901"/>
<dbReference type="DisGeNET" id="54901"/>
<dbReference type="GeneCards" id="CDKAL1"/>
<dbReference type="HGNC" id="HGNC:21050">
    <property type="gene designation" value="CDKAL1"/>
</dbReference>
<dbReference type="HPA" id="ENSG00000145996">
    <property type="expression patterns" value="Low tissue specificity"/>
</dbReference>
<dbReference type="MalaCards" id="CDKAL1"/>
<dbReference type="MIM" id="125853">
    <property type="type" value="phenotype"/>
</dbReference>
<dbReference type="MIM" id="611259">
    <property type="type" value="gene"/>
</dbReference>
<dbReference type="neXtProt" id="NX_Q5VV42"/>
<dbReference type="OpenTargets" id="ENSG00000145996"/>
<dbReference type="PharmGKB" id="PA134871999"/>
<dbReference type="VEuPathDB" id="HostDB:ENSG00000145996"/>
<dbReference type="eggNOG" id="KOG4355">
    <property type="taxonomic scope" value="Eukaryota"/>
</dbReference>
<dbReference type="GeneTree" id="ENSGT00940000155952"/>
<dbReference type="HOGENOM" id="CLU_018697_4_1_1"/>
<dbReference type="InParanoid" id="Q5VV42"/>
<dbReference type="OMA" id="HYAYPTG"/>
<dbReference type="OrthoDB" id="1730074at2759"/>
<dbReference type="PAN-GO" id="Q5VV42">
    <property type="GO annotations" value="3 GO annotations based on evolutionary models"/>
</dbReference>
<dbReference type="PhylomeDB" id="Q5VV42"/>
<dbReference type="TreeFam" id="TF317476"/>
<dbReference type="PathwayCommons" id="Q5VV42"/>
<dbReference type="Reactome" id="R-HSA-6782315">
    <property type="pathway name" value="tRNA modification in the nucleus and cytosol"/>
</dbReference>
<dbReference type="SignaLink" id="Q5VV42"/>
<dbReference type="SIGNOR" id="Q5VV42"/>
<dbReference type="BioGRID-ORCS" id="54901">
    <property type="hits" value="16 hits in 1157 CRISPR screens"/>
</dbReference>
<dbReference type="ChiTaRS" id="CDKAL1">
    <property type="organism name" value="human"/>
</dbReference>
<dbReference type="GeneWiki" id="CDKAL1"/>
<dbReference type="GenomeRNAi" id="54901"/>
<dbReference type="Pharos" id="Q5VV42">
    <property type="development level" value="Tbio"/>
</dbReference>
<dbReference type="PRO" id="PR:Q5VV42"/>
<dbReference type="Proteomes" id="UP000005640">
    <property type="component" value="Chromosome 6"/>
</dbReference>
<dbReference type="RNAct" id="Q5VV42">
    <property type="molecule type" value="protein"/>
</dbReference>
<dbReference type="Bgee" id="ENSG00000145996">
    <property type="expression patterns" value="Expressed in buccal mucosa cell and 128 other cell types or tissues"/>
</dbReference>
<dbReference type="GO" id="GO:0005783">
    <property type="term" value="C:endoplasmic reticulum"/>
    <property type="evidence" value="ECO:0000318"/>
    <property type="project" value="GO_Central"/>
</dbReference>
<dbReference type="GO" id="GO:0005789">
    <property type="term" value="C:endoplasmic reticulum membrane"/>
    <property type="evidence" value="ECO:0000304"/>
    <property type="project" value="Reactome"/>
</dbReference>
<dbReference type="GO" id="GO:0016020">
    <property type="term" value="C:membrane"/>
    <property type="evidence" value="ECO:0007005"/>
    <property type="project" value="UniProtKB"/>
</dbReference>
<dbReference type="GO" id="GO:0005791">
    <property type="term" value="C:rough endoplasmic reticulum"/>
    <property type="evidence" value="ECO:0007669"/>
    <property type="project" value="Ensembl"/>
</dbReference>
<dbReference type="GO" id="GO:0051539">
    <property type="term" value="F:4 iron, 4 sulfur cluster binding"/>
    <property type="evidence" value="ECO:0007669"/>
    <property type="project" value="UniProtKB-KW"/>
</dbReference>
<dbReference type="GO" id="GO:0046872">
    <property type="term" value="F:metal ion binding"/>
    <property type="evidence" value="ECO:0007669"/>
    <property type="project" value="UniProtKB-KW"/>
</dbReference>
<dbReference type="GO" id="GO:0035598">
    <property type="term" value="F:N6-threonylcarbomyladenosine methylthiotransferase activity"/>
    <property type="evidence" value="ECO:0000318"/>
    <property type="project" value="GO_Central"/>
</dbReference>
<dbReference type="GO" id="GO:0061712">
    <property type="term" value="F:tRNA (N(6)-L-threonylcarbamoyladenosine(37)-C(2))-methylthiotransferase"/>
    <property type="evidence" value="ECO:0007669"/>
    <property type="project" value="UniProtKB-EC"/>
</dbReference>
<dbReference type="GO" id="GO:1990145">
    <property type="term" value="P:maintenance of translational fidelity"/>
    <property type="evidence" value="ECO:0007669"/>
    <property type="project" value="Ensembl"/>
</dbReference>
<dbReference type="GO" id="GO:0035600">
    <property type="term" value="P:tRNA methylthiolation"/>
    <property type="evidence" value="ECO:0000318"/>
    <property type="project" value="GO_Central"/>
</dbReference>
<dbReference type="CDD" id="cd01335">
    <property type="entry name" value="Radical_SAM"/>
    <property type="match status" value="1"/>
</dbReference>
<dbReference type="FunFam" id="3.40.50.12160:FF:000005">
    <property type="entry name" value="threonylcarbamoyladenosine tRNA methylthiotransferase isoform X1"/>
    <property type="match status" value="1"/>
</dbReference>
<dbReference type="FunFam" id="3.80.30.20:FF:000002">
    <property type="entry name" value="threonylcarbamoyladenosine tRNA methylthiotransferase isoform X2"/>
    <property type="match status" value="1"/>
</dbReference>
<dbReference type="Gene3D" id="3.40.50.12160">
    <property type="entry name" value="Methylthiotransferase, N-terminal domain"/>
    <property type="match status" value="1"/>
</dbReference>
<dbReference type="Gene3D" id="3.80.30.20">
    <property type="entry name" value="tm_1862 like domain"/>
    <property type="match status" value="1"/>
</dbReference>
<dbReference type="InterPro" id="IPR006638">
    <property type="entry name" value="Elp3/MiaA/NifB-like_rSAM"/>
</dbReference>
<dbReference type="InterPro" id="IPR005839">
    <property type="entry name" value="Methylthiotransferase"/>
</dbReference>
<dbReference type="InterPro" id="IPR020612">
    <property type="entry name" value="Methylthiotransferase_CS"/>
</dbReference>
<dbReference type="InterPro" id="IPR013848">
    <property type="entry name" value="Methylthiotransferase_N"/>
</dbReference>
<dbReference type="InterPro" id="IPR038135">
    <property type="entry name" value="Methylthiotransferase_N_sf"/>
</dbReference>
<dbReference type="InterPro" id="IPR006466">
    <property type="entry name" value="MiaB-like_arc_euk"/>
</dbReference>
<dbReference type="InterPro" id="IPR007197">
    <property type="entry name" value="rSAM"/>
</dbReference>
<dbReference type="InterPro" id="IPR023404">
    <property type="entry name" value="rSAM_horseshoe"/>
</dbReference>
<dbReference type="InterPro" id="IPR002792">
    <property type="entry name" value="TRAM_dom"/>
</dbReference>
<dbReference type="NCBIfam" id="TIGR01578">
    <property type="entry name" value="MiaB-like-B"/>
    <property type="match status" value="1"/>
</dbReference>
<dbReference type="NCBIfam" id="TIGR00089">
    <property type="entry name" value="MiaB/RimO family radical SAM methylthiotransferase"/>
    <property type="match status" value="1"/>
</dbReference>
<dbReference type="PANTHER" id="PTHR11918">
    <property type="entry name" value="RADICAL SAM PROTEINS"/>
    <property type="match status" value="1"/>
</dbReference>
<dbReference type="PANTHER" id="PTHR11918:SF45">
    <property type="entry name" value="THREONYLCARBAMOYLADENOSINE TRNA METHYLTHIOTRANSFERASE"/>
    <property type="match status" value="1"/>
</dbReference>
<dbReference type="Pfam" id="PF04055">
    <property type="entry name" value="Radical_SAM"/>
    <property type="match status" value="1"/>
</dbReference>
<dbReference type="Pfam" id="PF01938">
    <property type="entry name" value="TRAM"/>
    <property type="match status" value="1"/>
</dbReference>
<dbReference type="Pfam" id="PF00919">
    <property type="entry name" value="UPF0004"/>
    <property type="match status" value="1"/>
</dbReference>
<dbReference type="SFLD" id="SFLDG01082">
    <property type="entry name" value="B12-binding_domain_containing"/>
    <property type="match status" value="1"/>
</dbReference>
<dbReference type="SFLD" id="SFLDG01061">
    <property type="entry name" value="methylthiotransferase"/>
    <property type="match status" value="1"/>
</dbReference>
<dbReference type="SFLD" id="SFLDS00029">
    <property type="entry name" value="Radical_SAM"/>
    <property type="match status" value="1"/>
</dbReference>
<dbReference type="SMART" id="SM00729">
    <property type="entry name" value="Elp3"/>
    <property type="match status" value="1"/>
</dbReference>
<dbReference type="SUPFAM" id="SSF102114">
    <property type="entry name" value="Radical SAM enzymes"/>
    <property type="match status" value="1"/>
</dbReference>
<dbReference type="PROSITE" id="PS51449">
    <property type="entry name" value="MTTASE_N"/>
    <property type="match status" value="1"/>
</dbReference>
<dbReference type="PROSITE" id="PS01278">
    <property type="entry name" value="MTTASE_RADICAL"/>
    <property type="match status" value="1"/>
</dbReference>
<dbReference type="PROSITE" id="PS51918">
    <property type="entry name" value="RADICAL_SAM"/>
    <property type="match status" value="1"/>
</dbReference>
<dbReference type="PROSITE" id="PS50926">
    <property type="entry name" value="TRAM"/>
    <property type="match status" value="1"/>
</dbReference>
<comment type="function">
    <text evidence="1">Catalyzes the methylthiolation of N6-threonylcarbamoyladenosine (t(6)A), leading to the formation of 2-methylthio-N6-threonylcarbamoyladenosine (ms(2)t(6)A) at position 37 in tRNAs that read codons beginning with adenine.</text>
</comment>
<comment type="catalytic activity">
    <reaction evidence="1">
        <text>N(6)-L-threonylcarbamoyladenosine(37) in tRNA + (sulfur carrier)-SH + AH2 + 2 S-adenosyl-L-methionine = 2-methylsulfanyl-N(6)-L-threonylcarbamoyladenosine(37) in tRNA + (sulfur carrier)-H + 5'-deoxyadenosine + L-methionine + A + S-adenosyl-L-homocysteine + 2 H(+)</text>
        <dbReference type="Rhea" id="RHEA:37075"/>
        <dbReference type="Rhea" id="RHEA-COMP:10163"/>
        <dbReference type="Rhea" id="RHEA-COMP:11092"/>
        <dbReference type="Rhea" id="RHEA-COMP:14737"/>
        <dbReference type="Rhea" id="RHEA-COMP:14739"/>
        <dbReference type="ChEBI" id="CHEBI:13193"/>
        <dbReference type="ChEBI" id="CHEBI:15378"/>
        <dbReference type="ChEBI" id="CHEBI:17319"/>
        <dbReference type="ChEBI" id="CHEBI:17499"/>
        <dbReference type="ChEBI" id="CHEBI:29917"/>
        <dbReference type="ChEBI" id="CHEBI:57844"/>
        <dbReference type="ChEBI" id="CHEBI:57856"/>
        <dbReference type="ChEBI" id="CHEBI:59789"/>
        <dbReference type="ChEBI" id="CHEBI:64428"/>
        <dbReference type="ChEBI" id="CHEBI:74418"/>
        <dbReference type="ChEBI" id="CHEBI:74420"/>
        <dbReference type="EC" id="2.8.4.5"/>
    </reaction>
</comment>
<comment type="cofactor">
    <cofactor evidence="4">
        <name>[4Fe-4S] cluster</name>
        <dbReference type="ChEBI" id="CHEBI:49883"/>
    </cofactor>
    <text evidence="4">Binds 2 [4Fe-4S] clusters. One cluster is coordinated with 3 cysteines and an exchangeable S-adenosyl-L-methionine.</text>
</comment>
<comment type="interaction">
    <interactant intactId="EBI-10194801">
        <id>Q5VV42</id>
    </interactant>
    <interactant intactId="EBI-946046">
        <id>P54252</id>
        <label>ATXN3</label>
    </interactant>
    <organismsDiffer>false</organismsDiffer>
    <experiments>3</experiments>
</comment>
<comment type="interaction">
    <interactant intactId="EBI-10194801">
        <id>Q5VV42</id>
    </interactant>
    <interactant intactId="EBI-1348">
        <id>P06239</id>
        <label>LCK</label>
    </interactant>
    <organismsDiffer>false</organismsDiffer>
    <experiments>3</experiments>
</comment>
<comment type="interaction">
    <interactant intactId="EBI-10194801">
        <id>Q5VV42</id>
    </interactant>
    <interactant intactId="EBI-720609">
        <id>O76024</id>
        <label>WFS1</label>
    </interactant>
    <organismsDiffer>false</organismsDiffer>
    <experiments>3</experiments>
</comment>
<comment type="subcellular location">
    <subcellularLocation>
        <location evidence="8">Endoplasmic reticulum membrane</location>
        <topology evidence="2">Single-pass membrane protein</topology>
    </subcellularLocation>
    <text evidence="8">Is a tail-anchored protein that exploits the TCR40 pathway for insertion into the endoplasmic reticulum.</text>
</comment>
<comment type="alternative products">
    <event type="alternative splicing"/>
    <isoform>
        <id>Q5VV42-1</id>
        <name>1</name>
        <sequence type="displayed"/>
    </isoform>
    <isoform>
        <id>Q5VV42-2</id>
        <name>2</name>
        <sequence type="described" ref="VSP_027450 VSP_027453"/>
    </isoform>
    <isoform>
        <id>Q5VV42-3</id>
        <name>3</name>
        <sequence type="described" ref="VSP_027451 VSP_027452"/>
    </isoform>
</comment>
<comment type="tissue specificity">
    <text evidence="8">Expressed in pancreatic islets.</text>
</comment>
<comment type="disease" evidence="6 7">
    <disease id="DI-02060">
        <name>Type 2 diabetes mellitus</name>
        <acronym>T2D</acronym>
        <description>A multifactorial disorder of glucose homeostasis caused by a lack of sensitivity to insulin. Affected individuals usually have an obese body habitus and manifestations of a metabolic syndrome characterized by diabetes, insulin resistance, hypertension and hypertriglyceridemia. The disease results in long-term complications that affect the eyes, kidneys, nerves, and blood vessels.</description>
        <dbReference type="MIM" id="125853"/>
    </disease>
    <text>Disease susceptibility is associated with variants affecting the gene represented in this entry.</text>
</comment>
<comment type="similarity">
    <text evidence="11">Belongs to the methylthiotransferase family. CDKAL1 subfamily.</text>
</comment>
<comment type="sequence caution" evidence="11">
    <conflict type="frameshift">
        <sequence resource="EMBL-CDS" id="BAC87494"/>
    </conflict>
</comment>
<sequence length="579" mass="65111">MPSASCDTLLDDIEDIVSQEDSKPQDRHFVRKDVVPKVRRRNTQKYLQEEENSPPSDSTIPGIQKIWIRTWGCSHNNSDGEYMAGQLAAYGYKITENASDADLWLLNSCTVKNPAEDHFRNSIKKAQEENKKIVLAGCVPQAQPRQDYLKGLSIIGVQQIDRVVEVVEETIKGHSVRLLGQKKDNGRRLGGARLDLPKIRKNPLIEIISINTGCLNACTYCKTKHARGNLASYPIDELVDRAKQSFQEGVCEIWLTSEDTGAYGRDIGTNLPTLLWKLVEVIPEGAMLRLGMTNPPYILEHLEEMAKILNHPRVYAFLHIPVQSASDSVLMEMKREYCVADFKRVVDFLKEKVPGITIATDIICGFPGETDQDFQETVKLVEEYKFPSLFINQFYPRPGTPAAKMEQVPAQVKKQRTKDLSRVFHSYSPYDHKIGERQQVLVTEESFDSKFYVAHNQFYEQVLVPKNPAFMGKMVEVDIYESGKHFMKGQPVSDAKVYTPSISKPLAKGEVSGLTKDFRNGLGNQLSSGSHTSAASQCDSASSRMVLPMPRLHQDCALRMSVGLALLGLLFAFFVKVYN</sequence>